<reference key="1">
    <citation type="journal article" date="2005" name="Proc. Natl. Acad. Sci. U.S.A.">
        <title>Complete genome sequencing of Anaplasma marginale reveals that the surface is skewed to two superfamilies of outer membrane proteins.</title>
        <authorList>
            <person name="Brayton K.A."/>
            <person name="Kappmeyer L.S."/>
            <person name="Herndon D.R."/>
            <person name="Dark M.J."/>
            <person name="Tibbals D.L."/>
            <person name="Palmer G.H."/>
            <person name="McGuire T.C."/>
            <person name="Knowles D.P. Jr."/>
        </authorList>
    </citation>
    <scope>NUCLEOTIDE SEQUENCE [LARGE SCALE GENOMIC DNA]</scope>
    <source>
        <strain>St. Maries</strain>
    </source>
</reference>
<evidence type="ECO:0000255" key="1">
    <source>
        <dbReference type="HAMAP-Rule" id="MF_00171"/>
    </source>
</evidence>
<sequence>MRYRAVVEYDGTAFIGWQRQKGVAGRSVQESIEDAIYRLSQQCVTVFAAGRTDAGVHALGQVVHFDLNTSLQDYVIKNALNHYLRSDMVSILSLEEAAEGFHARFSAKKRHYMYKIVNRDAPPCLDRLRMWHVPKQLNVSDMQEAASHMVGEKKDFASFRAKECQSKSSVRTVDRIDCVREGNNIFVHVSAKSFLHKQVRIIVGTLVQCGHGAFPPSYVLEILERKNRAAAGITAPPHGLYLVLVEY</sequence>
<dbReference type="EC" id="5.4.99.12" evidence="1"/>
<dbReference type="EMBL" id="CP000030">
    <property type="protein sequence ID" value="AAV86644.1"/>
    <property type="molecule type" value="Genomic_DNA"/>
</dbReference>
<dbReference type="RefSeq" id="WP_011114381.1">
    <property type="nucleotide sequence ID" value="NC_004842.2"/>
</dbReference>
<dbReference type="SMR" id="Q5PAN6"/>
<dbReference type="KEGG" id="ama:AM661"/>
<dbReference type="HOGENOM" id="CLU_014673_0_2_5"/>
<dbReference type="GO" id="GO:0003723">
    <property type="term" value="F:RNA binding"/>
    <property type="evidence" value="ECO:0007669"/>
    <property type="project" value="InterPro"/>
</dbReference>
<dbReference type="GO" id="GO:0160147">
    <property type="term" value="F:tRNA pseudouridine(38-40) synthase activity"/>
    <property type="evidence" value="ECO:0007669"/>
    <property type="project" value="UniProtKB-EC"/>
</dbReference>
<dbReference type="GO" id="GO:0031119">
    <property type="term" value="P:tRNA pseudouridine synthesis"/>
    <property type="evidence" value="ECO:0007669"/>
    <property type="project" value="UniProtKB-UniRule"/>
</dbReference>
<dbReference type="CDD" id="cd02570">
    <property type="entry name" value="PseudoU_synth_EcTruA"/>
    <property type="match status" value="1"/>
</dbReference>
<dbReference type="FunFam" id="3.30.70.580:FF:000001">
    <property type="entry name" value="tRNA pseudouridine synthase A"/>
    <property type="match status" value="1"/>
</dbReference>
<dbReference type="Gene3D" id="3.30.70.660">
    <property type="entry name" value="Pseudouridine synthase I, catalytic domain, C-terminal subdomain"/>
    <property type="match status" value="1"/>
</dbReference>
<dbReference type="Gene3D" id="3.30.70.580">
    <property type="entry name" value="Pseudouridine synthase I, catalytic domain, N-terminal subdomain"/>
    <property type="match status" value="1"/>
</dbReference>
<dbReference type="HAMAP" id="MF_00171">
    <property type="entry name" value="TruA"/>
    <property type="match status" value="1"/>
</dbReference>
<dbReference type="InterPro" id="IPR020103">
    <property type="entry name" value="PsdUridine_synth_cat_dom_sf"/>
</dbReference>
<dbReference type="InterPro" id="IPR001406">
    <property type="entry name" value="PsdUridine_synth_TruA"/>
</dbReference>
<dbReference type="InterPro" id="IPR020097">
    <property type="entry name" value="PsdUridine_synth_TruA_a/b_dom"/>
</dbReference>
<dbReference type="InterPro" id="IPR020095">
    <property type="entry name" value="PsdUridine_synth_TruA_C"/>
</dbReference>
<dbReference type="InterPro" id="IPR020094">
    <property type="entry name" value="TruA/RsuA/RluB/E/F_N"/>
</dbReference>
<dbReference type="NCBIfam" id="TIGR00071">
    <property type="entry name" value="hisT_truA"/>
    <property type="match status" value="1"/>
</dbReference>
<dbReference type="PANTHER" id="PTHR11142">
    <property type="entry name" value="PSEUDOURIDYLATE SYNTHASE"/>
    <property type="match status" value="1"/>
</dbReference>
<dbReference type="PANTHER" id="PTHR11142:SF0">
    <property type="entry name" value="TRNA PSEUDOURIDINE SYNTHASE-LIKE 1"/>
    <property type="match status" value="1"/>
</dbReference>
<dbReference type="Pfam" id="PF01416">
    <property type="entry name" value="PseudoU_synth_1"/>
    <property type="match status" value="2"/>
</dbReference>
<dbReference type="PIRSF" id="PIRSF001430">
    <property type="entry name" value="tRNA_psdUrid_synth"/>
    <property type="match status" value="1"/>
</dbReference>
<dbReference type="SUPFAM" id="SSF55120">
    <property type="entry name" value="Pseudouridine synthase"/>
    <property type="match status" value="1"/>
</dbReference>
<feature type="chain" id="PRO_0000057315" description="tRNA pseudouridine synthase A">
    <location>
        <begin position="1"/>
        <end position="247"/>
    </location>
</feature>
<feature type="active site" description="Nucleophile" evidence="1">
    <location>
        <position position="53"/>
    </location>
</feature>
<feature type="binding site" evidence="1">
    <location>
        <position position="112"/>
    </location>
    <ligand>
        <name>substrate</name>
    </ligand>
</feature>
<organism>
    <name type="scientific">Anaplasma marginale (strain St. Maries)</name>
    <dbReference type="NCBI Taxonomy" id="234826"/>
    <lineage>
        <taxon>Bacteria</taxon>
        <taxon>Pseudomonadati</taxon>
        <taxon>Pseudomonadota</taxon>
        <taxon>Alphaproteobacteria</taxon>
        <taxon>Rickettsiales</taxon>
        <taxon>Anaplasmataceae</taxon>
        <taxon>Anaplasma</taxon>
    </lineage>
</organism>
<accession>Q5PAN6</accession>
<protein>
    <recommendedName>
        <fullName evidence="1">tRNA pseudouridine synthase A</fullName>
        <ecNumber evidence="1">5.4.99.12</ecNumber>
    </recommendedName>
    <alternativeName>
        <fullName evidence="1">tRNA pseudouridine(38-40) synthase</fullName>
    </alternativeName>
    <alternativeName>
        <fullName evidence="1">tRNA pseudouridylate synthase I</fullName>
    </alternativeName>
    <alternativeName>
        <fullName evidence="1">tRNA-uridine isomerase I</fullName>
    </alternativeName>
</protein>
<proteinExistence type="inferred from homology"/>
<gene>
    <name evidence="1" type="primary">truA</name>
    <name type="ordered locus">AM661</name>
</gene>
<name>TRUA_ANAMM</name>
<keyword id="KW-0413">Isomerase</keyword>
<keyword id="KW-0819">tRNA processing</keyword>
<comment type="function">
    <text evidence="1">Formation of pseudouridine at positions 38, 39 and 40 in the anticodon stem and loop of transfer RNAs.</text>
</comment>
<comment type="catalytic activity">
    <reaction evidence="1">
        <text>uridine(38/39/40) in tRNA = pseudouridine(38/39/40) in tRNA</text>
        <dbReference type="Rhea" id="RHEA:22376"/>
        <dbReference type="Rhea" id="RHEA-COMP:10085"/>
        <dbReference type="Rhea" id="RHEA-COMP:10087"/>
        <dbReference type="ChEBI" id="CHEBI:65314"/>
        <dbReference type="ChEBI" id="CHEBI:65315"/>
        <dbReference type="EC" id="5.4.99.12"/>
    </reaction>
</comment>
<comment type="subunit">
    <text evidence="1">Homodimer.</text>
</comment>
<comment type="similarity">
    <text evidence="1">Belongs to the tRNA pseudouridine synthase TruA family.</text>
</comment>